<name>DHAM_PANAM</name>
<reference key="1">
    <citation type="journal article" date="2010" name="J. Bacteriol.">
        <title>Genome sequence of Pantoea ananatis LMG20103, the causative agent of Eucalyptus blight and dieback.</title>
        <authorList>
            <person name="De Maayer P."/>
            <person name="Chan W.Y."/>
            <person name="Venter S.N."/>
            <person name="Toth I.K."/>
            <person name="Birch P.R."/>
            <person name="Joubert F."/>
            <person name="Coutinho T.A."/>
        </authorList>
    </citation>
    <scope>NUCLEOTIDE SEQUENCE [LARGE SCALE GENOMIC DNA]</scope>
    <source>
        <strain>LMG 20103</strain>
    </source>
</reference>
<reference key="2">
    <citation type="journal article" date="2015" name="Elife">
        <title>YcgC represents a new protein deacetylase family in prokaryotes.</title>
        <authorList>
            <person name="Tu S."/>
            <person name="Guo S.J."/>
            <person name="Chen C.S."/>
            <person name="Liu C.X."/>
            <person name="Jiang H.W."/>
            <person name="Ge F."/>
            <person name="Deng J.Y."/>
            <person name="Zhou Y.M."/>
            <person name="Czajkowsky D.M."/>
            <person name="Li Y."/>
            <person name="Qi B.R."/>
            <person name="Ahn Y.H."/>
            <person name="Cole P.A."/>
            <person name="Zhu H."/>
            <person name="Tao S.C."/>
        </authorList>
    </citation>
    <scope>PROTEIN-LYSINE DEACETYLASE ACTIVITY</scope>
    <scope>CAUTION</scope>
    <source>
        <strain>LMG 5342</strain>
    </source>
</reference>
<reference key="3">
    <citation type="journal article" date="2018" name="Elife">
        <title>Comment on 'YcgC represents a new protein deacetylase family in prokaryotes'.</title>
        <authorList>
            <person name="Kremer M."/>
            <person name="Kuhlmann N."/>
            <person name="Lechner M."/>
            <person name="Baldus L."/>
            <person name="Lammers M."/>
        </authorList>
    </citation>
    <scope>NO PROTEIN-LYSINE DEACETYLASE ACTIVITY IN E.COLI ORTHOLOG</scope>
    <scope>CAUTION</scope>
</reference>
<gene>
    <name evidence="1 7" type="primary">dhaM</name>
    <name evidence="7" type="ordered locus">PANA_0905</name>
</gene>
<sequence length="473" mass="50178">MVNLVIVSHSAMLGEGVEMLARQMLTGDNCRIAVAAGIDDPDHPIGTDPIKVMEAIEAVADTDHVLVMMDMGSALLSAETALDLLDPVIAEKVRLCAAPLVEGTLAATVSAAAGADIDTVIDVAMNALAAKQAQLGITPPAHAASLPAQAPDSDARSVTVTIRNHHGLHVRPASRLVAALAGMNADLVLEKQGQCVKPDSLNQIALLQVRCHDAVTLSASGPDAERALAAFESLAAEDFGEHPESMALKTSASTVEKVQGKAVFYPLPLAQPARHPCSDVGQEERRLQQAIVDTLNDLNALAALAEKKYGASVAAIFSGHYTLLDDPDLFDAACKVIRNDSCCAESAWYQVLMELSQQYQHLDDAYLQARFIDIEDILYRSLCHLKGRDIRLPTPDVPAIIVADDIFPSAVVNLNAQLVKGICLREGSTLSHAAIIAQQAGIAFICQQGAVLDIIQPEDRLLIDPAAQRVSCA</sequence>
<proteinExistence type="inferred from homology"/>
<evidence type="ECO:0000250" key="1">
    <source>
        <dbReference type="UniProtKB" id="P37349"/>
    </source>
</evidence>
<evidence type="ECO:0000255" key="2">
    <source>
        <dbReference type="PROSITE-ProRule" id="PRU00419"/>
    </source>
</evidence>
<evidence type="ECO:0000255" key="3">
    <source>
        <dbReference type="PROSITE-ProRule" id="PRU00681"/>
    </source>
</evidence>
<evidence type="ECO:0000269" key="4">
    <source>
    </source>
</evidence>
<evidence type="ECO:0000269" key="5">
    <source>
    </source>
</evidence>
<evidence type="ECO:0000305" key="6"/>
<evidence type="ECO:0000312" key="7">
    <source>
        <dbReference type="EMBL" id="ADD76072.1"/>
    </source>
</evidence>
<accession>D4GL26</accession>
<organism>
    <name type="scientific">Pantoea ananatis (strain LMG 20103)</name>
    <dbReference type="NCBI Taxonomy" id="706191"/>
    <lineage>
        <taxon>Bacteria</taxon>
        <taxon>Pseudomonadati</taxon>
        <taxon>Pseudomonadota</taxon>
        <taxon>Gammaproteobacteria</taxon>
        <taxon>Enterobacterales</taxon>
        <taxon>Erwiniaceae</taxon>
        <taxon>Pantoea</taxon>
    </lineage>
</organism>
<dbReference type="EC" id="2.7.1.121" evidence="1"/>
<dbReference type="EMBL" id="CP001875">
    <property type="protein sequence ID" value="ADD76072.1"/>
    <property type="molecule type" value="Genomic_DNA"/>
</dbReference>
<dbReference type="RefSeq" id="WP_013024797.1">
    <property type="nucleotide sequence ID" value="NC_013956.2"/>
</dbReference>
<dbReference type="SMR" id="D4GL26"/>
<dbReference type="STRING" id="706191.PANA_0905"/>
<dbReference type="KEGG" id="pam:PANA_0905"/>
<dbReference type="eggNOG" id="COG1080">
    <property type="taxonomic scope" value="Bacteria"/>
</dbReference>
<dbReference type="eggNOG" id="COG1925">
    <property type="taxonomic scope" value="Bacteria"/>
</dbReference>
<dbReference type="eggNOG" id="COG3412">
    <property type="taxonomic scope" value="Bacteria"/>
</dbReference>
<dbReference type="HOGENOM" id="CLU_045361_0_0_6"/>
<dbReference type="Proteomes" id="UP000001702">
    <property type="component" value="Chromosome"/>
</dbReference>
<dbReference type="GO" id="GO:0016020">
    <property type="term" value="C:membrane"/>
    <property type="evidence" value="ECO:0007669"/>
    <property type="project" value="InterPro"/>
</dbReference>
<dbReference type="GO" id="GO:0047324">
    <property type="term" value="F:phosphoenolpyruvate-glycerone phosphotransferase activity"/>
    <property type="evidence" value="ECO:0007669"/>
    <property type="project" value="UniProtKB-EC"/>
</dbReference>
<dbReference type="GO" id="GO:0019563">
    <property type="term" value="P:glycerol catabolic process"/>
    <property type="evidence" value="ECO:0007669"/>
    <property type="project" value="InterPro"/>
</dbReference>
<dbReference type="GO" id="GO:0009401">
    <property type="term" value="P:phosphoenolpyruvate-dependent sugar phosphotransferase system"/>
    <property type="evidence" value="ECO:0007669"/>
    <property type="project" value="InterPro"/>
</dbReference>
<dbReference type="CDD" id="cd00367">
    <property type="entry name" value="PTS-HPr_like"/>
    <property type="match status" value="1"/>
</dbReference>
<dbReference type="Gene3D" id="3.30.1340.10">
    <property type="entry name" value="HPr-like"/>
    <property type="match status" value="1"/>
</dbReference>
<dbReference type="Gene3D" id="3.50.30.10">
    <property type="entry name" value="Phosphohistidine domain"/>
    <property type="match status" value="1"/>
</dbReference>
<dbReference type="Gene3D" id="3.40.50.510">
    <property type="entry name" value="Phosphotransferase system, mannose-type IIA component"/>
    <property type="match status" value="1"/>
</dbReference>
<dbReference type="Gene3D" id="1.10.274.10">
    <property type="entry name" value="PtsI, HPr-binding domain"/>
    <property type="match status" value="1"/>
</dbReference>
<dbReference type="InterPro" id="IPR039643">
    <property type="entry name" value="DhaM"/>
</dbReference>
<dbReference type="InterPro" id="IPR012844">
    <property type="entry name" value="DhaM_N"/>
</dbReference>
<dbReference type="InterPro" id="IPR000032">
    <property type="entry name" value="HPr-like"/>
</dbReference>
<dbReference type="InterPro" id="IPR035895">
    <property type="entry name" value="HPr-like_sf"/>
</dbReference>
<dbReference type="InterPro" id="IPR008279">
    <property type="entry name" value="PEP-util_enz_mobile_dom"/>
</dbReference>
<dbReference type="InterPro" id="IPR036637">
    <property type="entry name" value="Phosphohistidine_dom_sf"/>
</dbReference>
<dbReference type="InterPro" id="IPR004701">
    <property type="entry name" value="PTS_EIIA_man-typ"/>
</dbReference>
<dbReference type="InterPro" id="IPR036662">
    <property type="entry name" value="PTS_EIIA_man-typ_sf"/>
</dbReference>
<dbReference type="InterPro" id="IPR008731">
    <property type="entry name" value="PTS_EIN"/>
</dbReference>
<dbReference type="InterPro" id="IPR001020">
    <property type="entry name" value="PTS_HPr_His_P_site"/>
</dbReference>
<dbReference type="InterPro" id="IPR036618">
    <property type="entry name" value="PtsI_HPr-bd_sf"/>
</dbReference>
<dbReference type="NCBIfam" id="TIGR02364">
    <property type="entry name" value="dha_pts"/>
    <property type="match status" value="1"/>
</dbReference>
<dbReference type="NCBIfam" id="NF008478">
    <property type="entry name" value="PRK11377.1"/>
    <property type="match status" value="1"/>
</dbReference>
<dbReference type="NCBIfam" id="TIGR01003">
    <property type="entry name" value="PTS_HPr_family"/>
    <property type="match status" value="1"/>
</dbReference>
<dbReference type="PANTHER" id="PTHR38594">
    <property type="entry name" value="PEP-DEPENDENT DIHYDROXYACETONE KINASE, PHOSPHORYL DONOR SUBUNIT DHAM"/>
    <property type="match status" value="1"/>
</dbReference>
<dbReference type="PANTHER" id="PTHR38594:SF1">
    <property type="entry name" value="PEP-DEPENDENT DIHYDROXYACETONE KINASE, PHOSPHORYL DONOR SUBUNIT DHAM"/>
    <property type="match status" value="1"/>
</dbReference>
<dbReference type="Pfam" id="PF03610">
    <property type="entry name" value="EIIA-man"/>
    <property type="match status" value="1"/>
</dbReference>
<dbReference type="Pfam" id="PF05524">
    <property type="entry name" value="PEP-utilisers_N"/>
    <property type="match status" value="1"/>
</dbReference>
<dbReference type="Pfam" id="PF00391">
    <property type="entry name" value="PEP-utilizers"/>
    <property type="match status" value="1"/>
</dbReference>
<dbReference type="Pfam" id="PF00381">
    <property type="entry name" value="PTS-HPr"/>
    <property type="match status" value="1"/>
</dbReference>
<dbReference type="SUPFAM" id="SSF47831">
    <property type="entry name" value="Enzyme I of the PEP:sugar phosphotransferase system HPr-binding (sub)domain"/>
    <property type="match status" value="1"/>
</dbReference>
<dbReference type="SUPFAM" id="SSF55594">
    <property type="entry name" value="HPr-like"/>
    <property type="match status" value="1"/>
</dbReference>
<dbReference type="SUPFAM" id="SSF52009">
    <property type="entry name" value="Phosphohistidine domain"/>
    <property type="match status" value="1"/>
</dbReference>
<dbReference type="SUPFAM" id="SSF53062">
    <property type="entry name" value="PTS system fructose IIA component-like"/>
    <property type="match status" value="1"/>
</dbReference>
<dbReference type="PROSITE" id="PS51096">
    <property type="entry name" value="PTS_EIIA_TYPE_4"/>
    <property type="match status" value="1"/>
</dbReference>
<dbReference type="PROSITE" id="PS51350">
    <property type="entry name" value="PTS_HPR_DOM"/>
    <property type="match status" value="1"/>
</dbReference>
<dbReference type="PROSITE" id="PS00369">
    <property type="entry name" value="PTS_HPR_HIS"/>
    <property type="match status" value="1"/>
</dbReference>
<protein>
    <recommendedName>
        <fullName evidence="1">PEP-dependent dihydroxyacetone kinase, phosphoryl donor subunit DhaM</fullName>
        <ecNumber evidence="1">2.7.1.121</ecNumber>
    </recommendedName>
    <alternativeName>
        <fullName evidence="1">Dihydroxyacetone kinase subunit M</fullName>
    </alternativeName>
</protein>
<keyword id="KW-1185">Reference proteome</keyword>
<keyword id="KW-0808">Transferase</keyword>
<feature type="chain" id="PRO_0000435890" description="PEP-dependent dihydroxyacetone kinase, phosphoryl donor subunit DhaM">
    <location>
        <begin position="1"/>
        <end position="473"/>
    </location>
</feature>
<feature type="domain" description="PTS EIIA type-4" evidence="2">
    <location>
        <begin position="1"/>
        <end position="137"/>
    </location>
</feature>
<feature type="domain" description="HPr" evidence="3">
    <location>
        <begin position="155"/>
        <end position="242"/>
    </location>
</feature>
<feature type="region of interest" description="PTS EI-like, N-terminal part" evidence="1">
    <location>
        <begin position="266"/>
        <end position="472"/>
    </location>
</feature>
<feature type="active site" description="Tele-phosphohistidine intermediate" evidence="2">
    <location>
        <position position="9"/>
    </location>
</feature>
<feature type="active site" description="Pros-phosphohistidine intermediate" evidence="3">
    <location>
        <position position="169"/>
    </location>
</feature>
<feature type="active site" description="Tele-phosphohistidine intermediate" evidence="1">
    <location>
        <position position="432"/>
    </location>
</feature>
<comment type="function">
    <text evidence="1">Component of the dihydroxyacetone kinase complex, which is responsible for the phosphoenolpyruvate (PEP)-dependent phosphorylation of dihydroxyacetone. DhaM serves as the phosphoryl donor. Is phosphorylated by phosphoenolpyruvate in an EI- and HPr-dependent reaction, and a phosphorelay system on histidine residues finally leads to phosphoryl transfer to DhaL and dihydroxyacetone.</text>
</comment>
<comment type="catalytic activity">
    <reaction evidence="1">
        <text>dihydroxyacetone + phosphoenolpyruvate = dihydroxyacetone phosphate + pyruvate</text>
        <dbReference type="Rhea" id="RHEA:18381"/>
        <dbReference type="ChEBI" id="CHEBI:15361"/>
        <dbReference type="ChEBI" id="CHEBI:16016"/>
        <dbReference type="ChEBI" id="CHEBI:57642"/>
        <dbReference type="ChEBI" id="CHEBI:58702"/>
        <dbReference type="EC" id="2.7.1.121"/>
    </reaction>
</comment>
<comment type="subunit">
    <text evidence="1">Homodimer. The dihydroxyacetone kinase complex is composed of a homodimer of DhaM, a homodimer of DhaK and the subunit DhaL.</text>
</comment>
<comment type="domain">
    <text evidence="1">Consists of three domains. The N-terminal dimerization domain has the same fold as the IIA domain of the mannose transporter of the bacterial phosphoenolpyruvate:sugar phosphotransferase system (PTS). The middle domain is similar to HPr and the C-terminus is similar to the N-terminal domain of enzyme I (EI) of the PTS. The IIA domain of DhaM (via phospho-His-9), instead of ATP, is the phosphoryl donor to dihydroxyacetone (Dha). The phosphoryl flow likely involves HPr ('His-15') -&gt; DhaM (His-432 -&gt; His-169 -&gt; His-9) -&gt; DhaL-ADP -&gt; Dha. The HPr-like domain of DhaM cannot efficiently substitute for the general carrier protein HPr.</text>
</comment>
<comment type="miscellaneous">
    <text evidence="1">Unlike the carbohydrate-specific transporters of the PTS, the complex DhaKLM has no transport activity.</text>
</comment>
<comment type="similarity">
    <text evidence="6">Belongs to the PEP-utilizing enzyme family.</text>
</comment>
<comment type="caution">
    <text evidence="4 5">Was reported to be a protein deacetylase that removes acetyl groups on specific lysine residues in target proteins (PubMed:26716769). However, later experiments demonstrate that the protein ortholog in E.coli does not have any protein deacetylase activity; the discrepancy observed seems to be due to contaminants having proteolytic activity (PubMed:29939131).</text>
</comment>